<organism>
    <name type="scientific">Protochlamydia amoebophila (strain UWE25)</name>
    <dbReference type="NCBI Taxonomy" id="264201"/>
    <lineage>
        <taxon>Bacteria</taxon>
        <taxon>Pseudomonadati</taxon>
        <taxon>Chlamydiota</taxon>
        <taxon>Chlamydiia</taxon>
        <taxon>Parachlamydiales</taxon>
        <taxon>Parachlamydiaceae</taxon>
        <taxon>Candidatus Protochlamydia</taxon>
    </lineage>
</organism>
<evidence type="ECO:0000255" key="1">
    <source>
        <dbReference type="HAMAP-Rule" id="MF_01818"/>
    </source>
</evidence>
<sequence length="306" mass="34982">MSVRDLTILGCSSQQPTRFRNHGAYLLRWNGEGFLFDPGEGTQRQFIFANIAPSVINRIFISHFHGDHCLGLGSILMRLNLDKVRHPIHCYYPASGKKYFDRLRYGTIYHEMIHVVEHPVSKAGLVEDDGRFKIEAAFLQHGIENIGWRITEADTRKFDNQKLIDRGIRGSLVKELQEKGQLNLDGQTIYLDDVSWIRKGDQFSVVIDTLPCQNAIDIARNATLLLCESTYLEEHKELARLHSHLTAKQAALIAKEANAKQLILTHFSARYQNLKLFEQEARTIFANTFVANDLITFPFTKVNLKS</sequence>
<name>RNZ_PARUW</name>
<reference key="1">
    <citation type="journal article" date="2004" name="Science">
        <title>Illuminating the evolutionary history of chlamydiae.</title>
        <authorList>
            <person name="Horn M."/>
            <person name="Collingro A."/>
            <person name="Schmitz-Esser S."/>
            <person name="Beier C.L."/>
            <person name="Purkhold U."/>
            <person name="Fartmann B."/>
            <person name="Brandt P."/>
            <person name="Nyakatura G.J."/>
            <person name="Droege M."/>
            <person name="Frishman D."/>
            <person name="Rattei T."/>
            <person name="Mewes H.-W."/>
            <person name="Wagner M."/>
        </authorList>
    </citation>
    <scope>NUCLEOTIDE SEQUENCE [LARGE SCALE GENOMIC DNA]</scope>
    <source>
        <strain>UWE25</strain>
    </source>
</reference>
<gene>
    <name evidence="1" type="primary">rnz</name>
    <name type="synonym">elaC</name>
    <name type="ordered locus">pc0459</name>
</gene>
<keyword id="KW-0255">Endonuclease</keyword>
<keyword id="KW-0378">Hydrolase</keyword>
<keyword id="KW-0479">Metal-binding</keyword>
<keyword id="KW-0540">Nuclease</keyword>
<keyword id="KW-1185">Reference proteome</keyword>
<keyword id="KW-0819">tRNA processing</keyword>
<keyword id="KW-0862">Zinc</keyword>
<protein>
    <recommendedName>
        <fullName evidence="1">Ribonuclease Z</fullName>
        <shortName evidence="1">RNase Z</shortName>
        <ecNumber evidence="1">3.1.26.11</ecNumber>
    </recommendedName>
    <alternativeName>
        <fullName evidence="1">tRNA 3 endonuclease</fullName>
    </alternativeName>
    <alternativeName>
        <fullName evidence="1">tRNase Z</fullName>
    </alternativeName>
</protein>
<accession>Q6ME16</accession>
<feature type="chain" id="PRO_0000155882" description="Ribonuclease Z">
    <location>
        <begin position="1"/>
        <end position="306"/>
    </location>
</feature>
<feature type="active site" description="Proton acceptor" evidence="1">
    <location>
        <position position="67"/>
    </location>
</feature>
<feature type="binding site" evidence="1">
    <location>
        <position position="63"/>
    </location>
    <ligand>
        <name>Zn(2+)</name>
        <dbReference type="ChEBI" id="CHEBI:29105"/>
        <label>1</label>
        <note>catalytic</note>
    </ligand>
</feature>
<feature type="binding site" evidence="1">
    <location>
        <position position="65"/>
    </location>
    <ligand>
        <name>Zn(2+)</name>
        <dbReference type="ChEBI" id="CHEBI:29105"/>
        <label>1</label>
        <note>catalytic</note>
    </ligand>
</feature>
<feature type="binding site" evidence="1">
    <location>
        <position position="67"/>
    </location>
    <ligand>
        <name>Zn(2+)</name>
        <dbReference type="ChEBI" id="CHEBI:29105"/>
        <label>2</label>
        <note>catalytic</note>
    </ligand>
</feature>
<feature type="binding site" evidence="1">
    <location>
        <position position="68"/>
    </location>
    <ligand>
        <name>Zn(2+)</name>
        <dbReference type="ChEBI" id="CHEBI:29105"/>
        <label>2</label>
        <note>catalytic</note>
    </ligand>
</feature>
<feature type="binding site" evidence="1">
    <location>
        <position position="141"/>
    </location>
    <ligand>
        <name>Zn(2+)</name>
        <dbReference type="ChEBI" id="CHEBI:29105"/>
        <label>1</label>
        <note>catalytic</note>
    </ligand>
</feature>
<feature type="binding site" evidence="1">
    <location>
        <position position="208"/>
    </location>
    <ligand>
        <name>Zn(2+)</name>
        <dbReference type="ChEBI" id="CHEBI:29105"/>
        <label>1</label>
        <note>catalytic</note>
    </ligand>
</feature>
<feature type="binding site" evidence="1">
    <location>
        <position position="208"/>
    </location>
    <ligand>
        <name>Zn(2+)</name>
        <dbReference type="ChEBI" id="CHEBI:29105"/>
        <label>2</label>
        <note>catalytic</note>
    </ligand>
</feature>
<feature type="binding site" evidence="1">
    <location>
        <position position="266"/>
    </location>
    <ligand>
        <name>Zn(2+)</name>
        <dbReference type="ChEBI" id="CHEBI:29105"/>
        <label>2</label>
        <note>catalytic</note>
    </ligand>
</feature>
<proteinExistence type="inferred from homology"/>
<comment type="function">
    <text evidence="1">Zinc phosphodiesterase, which displays some tRNA 3'-processing endonuclease activity. Probably involved in tRNA maturation, by removing a 3'-trailer from precursor tRNA.</text>
</comment>
<comment type="catalytic activity">
    <reaction evidence="1">
        <text>Endonucleolytic cleavage of RNA, removing extra 3' nucleotides from tRNA precursor, generating 3' termini of tRNAs. A 3'-hydroxy group is left at the tRNA terminus and a 5'-phosphoryl group is left at the trailer molecule.</text>
        <dbReference type="EC" id="3.1.26.11"/>
    </reaction>
</comment>
<comment type="cofactor">
    <cofactor evidence="1">
        <name>Zn(2+)</name>
        <dbReference type="ChEBI" id="CHEBI:29105"/>
    </cofactor>
    <text evidence="1">Binds 2 Zn(2+) ions.</text>
</comment>
<comment type="subunit">
    <text evidence="1">Homodimer.</text>
</comment>
<comment type="similarity">
    <text evidence="1">Belongs to the RNase Z family.</text>
</comment>
<dbReference type="EC" id="3.1.26.11" evidence="1"/>
<dbReference type="EMBL" id="BX908798">
    <property type="protein sequence ID" value="CAF23183.1"/>
    <property type="molecule type" value="Genomic_DNA"/>
</dbReference>
<dbReference type="RefSeq" id="WP_011175009.1">
    <property type="nucleotide sequence ID" value="NC_005861.2"/>
</dbReference>
<dbReference type="SMR" id="Q6ME16"/>
<dbReference type="STRING" id="264201.pc0459"/>
<dbReference type="KEGG" id="pcu:PC_RS02230"/>
<dbReference type="eggNOG" id="COG1234">
    <property type="taxonomic scope" value="Bacteria"/>
</dbReference>
<dbReference type="HOGENOM" id="CLU_031317_2_1_0"/>
<dbReference type="OrthoDB" id="9800940at2"/>
<dbReference type="Proteomes" id="UP000000529">
    <property type="component" value="Chromosome"/>
</dbReference>
<dbReference type="GO" id="GO:0042781">
    <property type="term" value="F:3'-tRNA processing endoribonuclease activity"/>
    <property type="evidence" value="ECO:0007669"/>
    <property type="project" value="UniProtKB-UniRule"/>
</dbReference>
<dbReference type="GO" id="GO:0008270">
    <property type="term" value="F:zinc ion binding"/>
    <property type="evidence" value="ECO:0007669"/>
    <property type="project" value="UniProtKB-UniRule"/>
</dbReference>
<dbReference type="CDD" id="cd07717">
    <property type="entry name" value="RNaseZ_ZiPD-like_MBL-fold"/>
    <property type="match status" value="1"/>
</dbReference>
<dbReference type="Gene3D" id="3.60.15.10">
    <property type="entry name" value="Ribonuclease Z/Hydroxyacylglutathione hydrolase-like"/>
    <property type="match status" value="1"/>
</dbReference>
<dbReference type="HAMAP" id="MF_01818">
    <property type="entry name" value="RNase_Z_BN"/>
    <property type="match status" value="1"/>
</dbReference>
<dbReference type="InterPro" id="IPR001279">
    <property type="entry name" value="Metallo-B-lactamas"/>
</dbReference>
<dbReference type="InterPro" id="IPR036866">
    <property type="entry name" value="RibonucZ/Hydroxyglut_hydro"/>
</dbReference>
<dbReference type="InterPro" id="IPR013471">
    <property type="entry name" value="RNase_Z/BN"/>
</dbReference>
<dbReference type="NCBIfam" id="NF000801">
    <property type="entry name" value="PRK00055.1-3"/>
    <property type="match status" value="1"/>
</dbReference>
<dbReference type="NCBIfam" id="NF000804">
    <property type="entry name" value="PRK00055.2-1"/>
    <property type="match status" value="1"/>
</dbReference>
<dbReference type="NCBIfam" id="TIGR02651">
    <property type="entry name" value="RNase_Z"/>
    <property type="match status" value="1"/>
</dbReference>
<dbReference type="PANTHER" id="PTHR46018">
    <property type="entry name" value="ZINC PHOSPHODIESTERASE ELAC PROTEIN 1"/>
    <property type="match status" value="1"/>
</dbReference>
<dbReference type="PANTHER" id="PTHR46018:SF2">
    <property type="entry name" value="ZINC PHOSPHODIESTERASE ELAC PROTEIN 1"/>
    <property type="match status" value="1"/>
</dbReference>
<dbReference type="Pfam" id="PF00753">
    <property type="entry name" value="Lactamase_B"/>
    <property type="match status" value="1"/>
</dbReference>
<dbReference type="SUPFAM" id="SSF56281">
    <property type="entry name" value="Metallo-hydrolase/oxidoreductase"/>
    <property type="match status" value="1"/>
</dbReference>